<reference key="1">
    <citation type="journal article" date="2007" name="Genome Res.">
        <title>Genome characteristics of facultatively symbiotic Frankia sp. strains reflect host range and host plant biogeography.</title>
        <authorList>
            <person name="Normand P."/>
            <person name="Lapierre P."/>
            <person name="Tisa L.S."/>
            <person name="Gogarten J.P."/>
            <person name="Alloisio N."/>
            <person name="Bagnarol E."/>
            <person name="Bassi C.A."/>
            <person name="Berry A.M."/>
            <person name="Bickhart D.M."/>
            <person name="Choisne N."/>
            <person name="Couloux A."/>
            <person name="Cournoyer B."/>
            <person name="Cruveiller S."/>
            <person name="Daubin V."/>
            <person name="Demange N."/>
            <person name="Francino M.P."/>
            <person name="Goltsman E."/>
            <person name="Huang Y."/>
            <person name="Kopp O.R."/>
            <person name="Labarre L."/>
            <person name="Lapidus A."/>
            <person name="Lavire C."/>
            <person name="Marechal J."/>
            <person name="Martinez M."/>
            <person name="Mastronunzio J.E."/>
            <person name="Mullin B.C."/>
            <person name="Niemann J."/>
            <person name="Pujic P."/>
            <person name="Rawnsley T."/>
            <person name="Rouy Z."/>
            <person name="Schenowitz C."/>
            <person name="Sellstedt A."/>
            <person name="Tavares F."/>
            <person name="Tomkins J.P."/>
            <person name="Vallenet D."/>
            <person name="Valverde C."/>
            <person name="Wall L.G."/>
            <person name="Wang Y."/>
            <person name="Medigue C."/>
            <person name="Benson D.R."/>
        </authorList>
    </citation>
    <scope>NUCLEOTIDE SEQUENCE [LARGE SCALE GENOMIC DNA]</scope>
    <source>
        <strain>DSM 45986 / CECT 9034 / ACN14a</strain>
    </source>
</reference>
<keyword id="KW-0067">ATP-binding</keyword>
<keyword id="KW-0963">Cytoplasm</keyword>
<keyword id="KW-0436">Ligase</keyword>
<keyword id="KW-0547">Nucleotide-binding</keyword>
<keyword id="KW-0566">Pantothenate biosynthesis</keyword>
<keyword id="KW-1185">Reference proteome</keyword>
<protein>
    <recommendedName>
        <fullName evidence="1">Pantothenate synthetase 3</fullName>
        <shortName evidence="1">PS 3</shortName>
        <ecNumber evidence="1">6.3.2.1</ecNumber>
    </recommendedName>
    <alternativeName>
        <fullName evidence="1">Pantoate--beta-alanine ligase 3</fullName>
    </alternativeName>
    <alternativeName>
        <fullName evidence="1">Pantoate-activating enzyme 3</fullName>
    </alternativeName>
</protein>
<name>PANC3_FRAAA</name>
<proteinExistence type="inferred from homology"/>
<organism>
    <name type="scientific">Frankia alni (strain DSM 45986 / CECT 9034 / ACN14a)</name>
    <dbReference type="NCBI Taxonomy" id="326424"/>
    <lineage>
        <taxon>Bacteria</taxon>
        <taxon>Bacillati</taxon>
        <taxon>Actinomycetota</taxon>
        <taxon>Actinomycetes</taxon>
        <taxon>Frankiales</taxon>
        <taxon>Frankiaceae</taxon>
        <taxon>Frankia</taxon>
    </lineage>
</organism>
<dbReference type="EC" id="6.3.2.1" evidence="1"/>
<dbReference type="EMBL" id="CT573213">
    <property type="protein sequence ID" value="CAJ64994.1"/>
    <property type="molecule type" value="Genomic_DNA"/>
</dbReference>
<dbReference type="RefSeq" id="WP_011607417.1">
    <property type="nucleotide sequence ID" value="NC_008278.1"/>
</dbReference>
<dbReference type="SMR" id="Q0RC35"/>
<dbReference type="STRING" id="326424.FRAAL6371"/>
<dbReference type="KEGG" id="fal:FRAAL6371"/>
<dbReference type="eggNOG" id="COG0414">
    <property type="taxonomic scope" value="Bacteria"/>
</dbReference>
<dbReference type="HOGENOM" id="CLU_047148_0_0_11"/>
<dbReference type="OrthoDB" id="9773087at2"/>
<dbReference type="UniPathway" id="UPA00028">
    <property type="reaction ID" value="UER00005"/>
</dbReference>
<dbReference type="Proteomes" id="UP000000657">
    <property type="component" value="Chromosome"/>
</dbReference>
<dbReference type="GO" id="GO:0005829">
    <property type="term" value="C:cytosol"/>
    <property type="evidence" value="ECO:0007669"/>
    <property type="project" value="TreeGrafter"/>
</dbReference>
<dbReference type="GO" id="GO:0005524">
    <property type="term" value="F:ATP binding"/>
    <property type="evidence" value="ECO:0007669"/>
    <property type="project" value="UniProtKB-KW"/>
</dbReference>
<dbReference type="GO" id="GO:0004592">
    <property type="term" value="F:pantoate-beta-alanine ligase activity"/>
    <property type="evidence" value="ECO:0007669"/>
    <property type="project" value="UniProtKB-UniRule"/>
</dbReference>
<dbReference type="GO" id="GO:0015940">
    <property type="term" value="P:pantothenate biosynthetic process"/>
    <property type="evidence" value="ECO:0007669"/>
    <property type="project" value="UniProtKB-UniRule"/>
</dbReference>
<dbReference type="CDD" id="cd00560">
    <property type="entry name" value="PanC"/>
    <property type="match status" value="1"/>
</dbReference>
<dbReference type="Gene3D" id="3.40.50.620">
    <property type="entry name" value="HUPs"/>
    <property type="match status" value="1"/>
</dbReference>
<dbReference type="Gene3D" id="3.30.1300.10">
    <property type="entry name" value="Pantoate-beta-alanine ligase, C-terminal domain"/>
    <property type="match status" value="1"/>
</dbReference>
<dbReference type="HAMAP" id="MF_00158">
    <property type="entry name" value="PanC"/>
    <property type="match status" value="1"/>
</dbReference>
<dbReference type="InterPro" id="IPR004821">
    <property type="entry name" value="Cyt_trans-like"/>
</dbReference>
<dbReference type="InterPro" id="IPR003721">
    <property type="entry name" value="Pantoate_ligase"/>
</dbReference>
<dbReference type="InterPro" id="IPR042176">
    <property type="entry name" value="Pantoate_ligase_C"/>
</dbReference>
<dbReference type="InterPro" id="IPR014729">
    <property type="entry name" value="Rossmann-like_a/b/a_fold"/>
</dbReference>
<dbReference type="NCBIfam" id="TIGR00125">
    <property type="entry name" value="cyt_tran_rel"/>
    <property type="match status" value="1"/>
</dbReference>
<dbReference type="NCBIfam" id="TIGR00018">
    <property type="entry name" value="panC"/>
    <property type="match status" value="1"/>
</dbReference>
<dbReference type="PANTHER" id="PTHR21299">
    <property type="entry name" value="CYTIDYLATE KINASE/PANTOATE-BETA-ALANINE LIGASE"/>
    <property type="match status" value="1"/>
</dbReference>
<dbReference type="PANTHER" id="PTHR21299:SF1">
    <property type="entry name" value="PANTOATE--BETA-ALANINE LIGASE"/>
    <property type="match status" value="1"/>
</dbReference>
<dbReference type="Pfam" id="PF02569">
    <property type="entry name" value="Pantoate_ligase"/>
    <property type="match status" value="1"/>
</dbReference>
<dbReference type="SUPFAM" id="SSF52374">
    <property type="entry name" value="Nucleotidylyl transferase"/>
    <property type="match status" value="1"/>
</dbReference>
<sequence>MLRVLHTIEDVREQTREWRAAGSSIGCVMTMGALHEGHLSLVDAARRECDKVVLTLFVNPIQFGPSEDFDRYPRTEEADFRALRDRECDAVFAPATETIFPLGERRIDQVRTKVVVRGLTDVLCGPRRPGHFDGVTTEVLKMLHIVDCDRTYWGEKDYQQYAVIRAMVEDQGLPVKVVPCPTMRDVDGLALSSRNTYLDSGQRAIAPRLYAALRRGARRIAEQGIDVIGETTKQIAETLLAHGFDLVEYVEVYTGSLGPAVAGTPVEELRVFGAVRLGGARLLDNAAVADEVGG</sequence>
<feature type="chain" id="PRO_0000305455" description="Pantothenate synthetase 3">
    <location>
        <begin position="1"/>
        <end position="294"/>
    </location>
</feature>
<feature type="active site" description="Proton donor" evidence="1">
    <location>
        <position position="38"/>
    </location>
</feature>
<feature type="binding site" evidence="1">
    <location>
        <begin position="31"/>
        <end position="38"/>
    </location>
    <ligand>
        <name>ATP</name>
        <dbReference type="ChEBI" id="CHEBI:30616"/>
    </ligand>
</feature>
<feature type="binding site" evidence="1">
    <location>
        <position position="62"/>
    </location>
    <ligand>
        <name>(R)-pantoate</name>
        <dbReference type="ChEBI" id="CHEBI:15980"/>
    </ligand>
</feature>
<feature type="binding site" evidence="1">
    <location>
        <position position="62"/>
    </location>
    <ligand>
        <name>beta-alanine</name>
        <dbReference type="ChEBI" id="CHEBI:57966"/>
    </ligand>
</feature>
<feature type="binding site" evidence="1">
    <location>
        <begin position="154"/>
        <end position="157"/>
    </location>
    <ligand>
        <name>ATP</name>
        <dbReference type="ChEBI" id="CHEBI:30616"/>
    </ligand>
</feature>
<feature type="binding site" evidence="1">
    <location>
        <position position="160"/>
    </location>
    <ligand>
        <name>(R)-pantoate</name>
        <dbReference type="ChEBI" id="CHEBI:15980"/>
    </ligand>
</feature>
<feature type="binding site" evidence="1">
    <location>
        <begin position="191"/>
        <end position="194"/>
    </location>
    <ligand>
        <name>ATP</name>
        <dbReference type="ChEBI" id="CHEBI:30616"/>
    </ligand>
</feature>
<evidence type="ECO:0000255" key="1">
    <source>
        <dbReference type="HAMAP-Rule" id="MF_00158"/>
    </source>
</evidence>
<gene>
    <name evidence="1" type="primary">panC3</name>
    <name type="ordered locus">FRAAL6371</name>
</gene>
<comment type="function">
    <text evidence="1">Catalyzes the condensation of pantoate with beta-alanine in an ATP-dependent reaction via a pantoyl-adenylate intermediate.</text>
</comment>
<comment type="catalytic activity">
    <reaction evidence="1">
        <text>(R)-pantoate + beta-alanine + ATP = (R)-pantothenate + AMP + diphosphate + H(+)</text>
        <dbReference type="Rhea" id="RHEA:10912"/>
        <dbReference type="ChEBI" id="CHEBI:15378"/>
        <dbReference type="ChEBI" id="CHEBI:15980"/>
        <dbReference type="ChEBI" id="CHEBI:29032"/>
        <dbReference type="ChEBI" id="CHEBI:30616"/>
        <dbReference type="ChEBI" id="CHEBI:33019"/>
        <dbReference type="ChEBI" id="CHEBI:57966"/>
        <dbReference type="ChEBI" id="CHEBI:456215"/>
        <dbReference type="EC" id="6.3.2.1"/>
    </reaction>
</comment>
<comment type="pathway">
    <text evidence="1">Cofactor biosynthesis; (R)-pantothenate biosynthesis; (R)-pantothenate from (R)-pantoate and beta-alanine: step 1/1.</text>
</comment>
<comment type="subunit">
    <text evidence="1">Homodimer.</text>
</comment>
<comment type="subcellular location">
    <subcellularLocation>
        <location evidence="1">Cytoplasm</location>
    </subcellularLocation>
</comment>
<comment type="miscellaneous">
    <text evidence="1">The reaction proceeds by a bi uni uni bi ping pong mechanism.</text>
</comment>
<comment type="similarity">
    <text evidence="1">Belongs to the pantothenate synthetase family.</text>
</comment>
<accession>Q0RC35</accession>